<proteinExistence type="inferred from homology"/>
<comment type="function">
    <text evidence="2">GTP hydrolase that promotes the GTP-dependent binding of aminoacyl-tRNA to the A-site of ribosomes during protein biosynthesis.</text>
</comment>
<comment type="catalytic activity">
    <reaction evidence="2">
        <text>GTP + H2O = GDP + phosphate + H(+)</text>
        <dbReference type="Rhea" id="RHEA:19669"/>
        <dbReference type="ChEBI" id="CHEBI:15377"/>
        <dbReference type="ChEBI" id="CHEBI:15378"/>
        <dbReference type="ChEBI" id="CHEBI:37565"/>
        <dbReference type="ChEBI" id="CHEBI:43474"/>
        <dbReference type="ChEBI" id="CHEBI:58189"/>
        <dbReference type="EC" id="3.6.5.3"/>
    </reaction>
    <physiologicalReaction direction="left-to-right" evidence="2">
        <dbReference type="Rhea" id="RHEA:19670"/>
    </physiologicalReaction>
</comment>
<comment type="subunit">
    <text evidence="2">Monomer.</text>
</comment>
<comment type="subcellular location">
    <subcellularLocation>
        <location evidence="2">Cytoplasm</location>
    </subcellularLocation>
</comment>
<comment type="similarity">
    <text evidence="2">Belongs to the TRAFAC class translation factor GTPase superfamily. Classic translation factor GTPase family. EF-Tu/EF-1A subfamily.</text>
</comment>
<name>EFTU_HELMI</name>
<keyword id="KW-0963">Cytoplasm</keyword>
<keyword id="KW-0251">Elongation factor</keyword>
<keyword id="KW-0342">GTP-binding</keyword>
<keyword id="KW-0378">Hydrolase</keyword>
<keyword id="KW-0460">Magnesium</keyword>
<keyword id="KW-0479">Metal-binding</keyword>
<keyword id="KW-0547">Nucleotide-binding</keyword>
<keyword id="KW-0648">Protein biosynthesis</keyword>
<keyword id="KW-1185">Reference proteome</keyword>
<accession>B0TC54</accession>
<reference key="1">
    <citation type="journal article" date="2008" name="J. Bacteriol.">
        <title>The genome of Heliobacterium modesticaldum, a phototrophic representative of the Firmicutes containing the simplest photosynthetic apparatus.</title>
        <authorList>
            <person name="Sattley W.M."/>
            <person name="Madigan M.T."/>
            <person name="Swingley W.D."/>
            <person name="Cheung P.C."/>
            <person name="Clocksin K.M."/>
            <person name="Conrad A.L."/>
            <person name="Dejesa L.C."/>
            <person name="Honchak B.M."/>
            <person name="Jung D.O."/>
            <person name="Karbach L.E."/>
            <person name="Kurdoglu A."/>
            <person name="Lahiri S."/>
            <person name="Mastrian S.D."/>
            <person name="Page L.E."/>
            <person name="Taylor H.L."/>
            <person name="Wang Z.T."/>
            <person name="Raymond J."/>
            <person name="Chen M."/>
            <person name="Blankenship R.E."/>
            <person name="Touchman J.W."/>
        </authorList>
    </citation>
    <scope>NUCLEOTIDE SEQUENCE [LARGE SCALE GENOMIC DNA]</scope>
    <source>
        <strain>ATCC 51547 / Ice1</strain>
    </source>
</reference>
<organism>
    <name type="scientific">Heliobacterium modesticaldum (strain ATCC 51547 / Ice1)</name>
    <dbReference type="NCBI Taxonomy" id="498761"/>
    <lineage>
        <taxon>Bacteria</taxon>
        <taxon>Bacillati</taxon>
        <taxon>Bacillota</taxon>
        <taxon>Clostridia</taxon>
        <taxon>Eubacteriales</taxon>
        <taxon>Heliobacteriaceae</taxon>
        <taxon>Heliomicrobium</taxon>
    </lineage>
</organism>
<sequence length="400" mass="44013">MAKAKFERTKPHVNIGTIGHVDHGKTTTTAAITLVLSKVGKASFKKYDEIDAAPEERERGITINTAHVEYETDNRHYAHVDCPGHADYIKNMITGAAQMDGAILVVSAADGPMPQTREHILLARQVGVPYIVVWLNKADMVDDPELMELVEMEVRELLSSYEFPGDDIPIVAGSGLKALECGCGKRECEWCGKIWALMDEVDKYIPTPERATDKPFLMPVEDVFTITGRGTVATGRVERGTIKVGEEVEIVGLAESTRKTVVTGVEMFRKLLDFAQAGDNIGTLLRGVERKDIERGQVLAKPGSIKPHTKFTAEVYVLSKEEGGRHTPFFNGYRPQFYFRTTDVTGFIELPEGVEMCMPGDNIKMTIELGKTIAIEEGLRFAIREGGRTVGAGVVTGIIE</sequence>
<gene>
    <name evidence="2" type="primary">tuf</name>
    <name type="ordered locus">Helmi_13280</name>
    <name type="ORF">HM1_1376</name>
</gene>
<protein>
    <recommendedName>
        <fullName evidence="2">Elongation factor Tu</fullName>
        <shortName evidence="2">EF-Tu</shortName>
        <ecNumber evidence="2">3.6.5.3</ecNumber>
    </recommendedName>
</protein>
<dbReference type="EC" id="3.6.5.3" evidence="2"/>
<dbReference type="EMBL" id="CP000930">
    <property type="protein sequence ID" value="ABZ83953.1"/>
    <property type="molecule type" value="Genomic_DNA"/>
</dbReference>
<dbReference type="RefSeq" id="WP_012282469.1">
    <property type="nucleotide sequence ID" value="NC_010337.2"/>
</dbReference>
<dbReference type="SMR" id="B0TC54"/>
<dbReference type="STRING" id="498761.HM1_1376"/>
<dbReference type="KEGG" id="hmo:HM1_1376"/>
<dbReference type="eggNOG" id="COG0050">
    <property type="taxonomic scope" value="Bacteria"/>
</dbReference>
<dbReference type="HOGENOM" id="CLU_007265_0_1_9"/>
<dbReference type="OrthoDB" id="9804504at2"/>
<dbReference type="Proteomes" id="UP000008550">
    <property type="component" value="Chromosome"/>
</dbReference>
<dbReference type="GO" id="GO:0005829">
    <property type="term" value="C:cytosol"/>
    <property type="evidence" value="ECO:0007669"/>
    <property type="project" value="TreeGrafter"/>
</dbReference>
<dbReference type="GO" id="GO:0005525">
    <property type="term" value="F:GTP binding"/>
    <property type="evidence" value="ECO:0007669"/>
    <property type="project" value="UniProtKB-UniRule"/>
</dbReference>
<dbReference type="GO" id="GO:0003924">
    <property type="term" value="F:GTPase activity"/>
    <property type="evidence" value="ECO:0007669"/>
    <property type="project" value="InterPro"/>
</dbReference>
<dbReference type="GO" id="GO:0003746">
    <property type="term" value="F:translation elongation factor activity"/>
    <property type="evidence" value="ECO:0007669"/>
    <property type="project" value="UniProtKB-UniRule"/>
</dbReference>
<dbReference type="CDD" id="cd01884">
    <property type="entry name" value="EF_Tu"/>
    <property type="match status" value="1"/>
</dbReference>
<dbReference type="CDD" id="cd03697">
    <property type="entry name" value="EFTU_II"/>
    <property type="match status" value="1"/>
</dbReference>
<dbReference type="CDD" id="cd03707">
    <property type="entry name" value="EFTU_III"/>
    <property type="match status" value="1"/>
</dbReference>
<dbReference type="FunFam" id="2.40.30.10:FF:000001">
    <property type="entry name" value="Elongation factor Tu"/>
    <property type="match status" value="1"/>
</dbReference>
<dbReference type="FunFam" id="3.40.50.300:FF:000003">
    <property type="entry name" value="Elongation factor Tu"/>
    <property type="match status" value="1"/>
</dbReference>
<dbReference type="Gene3D" id="3.40.50.300">
    <property type="entry name" value="P-loop containing nucleotide triphosphate hydrolases"/>
    <property type="match status" value="1"/>
</dbReference>
<dbReference type="Gene3D" id="2.40.30.10">
    <property type="entry name" value="Translation factors"/>
    <property type="match status" value="2"/>
</dbReference>
<dbReference type="HAMAP" id="MF_00118_B">
    <property type="entry name" value="EF_Tu_B"/>
    <property type="match status" value="1"/>
</dbReference>
<dbReference type="InterPro" id="IPR041709">
    <property type="entry name" value="EF-Tu_GTP-bd"/>
</dbReference>
<dbReference type="InterPro" id="IPR050055">
    <property type="entry name" value="EF-Tu_GTPase"/>
</dbReference>
<dbReference type="InterPro" id="IPR004161">
    <property type="entry name" value="EFTu-like_2"/>
</dbReference>
<dbReference type="InterPro" id="IPR033720">
    <property type="entry name" value="EFTU_2"/>
</dbReference>
<dbReference type="InterPro" id="IPR031157">
    <property type="entry name" value="G_TR_CS"/>
</dbReference>
<dbReference type="InterPro" id="IPR027417">
    <property type="entry name" value="P-loop_NTPase"/>
</dbReference>
<dbReference type="InterPro" id="IPR005225">
    <property type="entry name" value="Small_GTP-bd"/>
</dbReference>
<dbReference type="InterPro" id="IPR000795">
    <property type="entry name" value="T_Tr_GTP-bd_dom"/>
</dbReference>
<dbReference type="InterPro" id="IPR009000">
    <property type="entry name" value="Transl_B-barrel_sf"/>
</dbReference>
<dbReference type="InterPro" id="IPR009001">
    <property type="entry name" value="Transl_elong_EF1A/Init_IF2_C"/>
</dbReference>
<dbReference type="InterPro" id="IPR004541">
    <property type="entry name" value="Transl_elong_EFTu/EF1A_bac/org"/>
</dbReference>
<dbReference type="InterPro" id="IPR004160">
    <property type="entry name" value="Transl_elong_EFTu/EF1A_C"/>
</dbReference>
<dbReference type="NCBIfam" id="TIGR00485">
    <property type="entry name" value="EF-Tu"/>
    <property type="match status" value="1"/>
</dbReference>
<dbReference type="NCBIfam" id="NF000766">
    <property type="entry name" value="PRK00049.1"/>
    <property type="match status" value="1"/>
</dbReference>
<dbReference type="NCBIfam" id="NF009372">
    <property type="entry name" value="PRK12735.1"/>
    <property type="match status" value="1"/>
</dbReference>
<dbReference type="NCBIfam" id="NF009373">
    <property type="entry name" value="PRK12736.1"/>
    <property type="match status" value="1"/>
</dbReference>
<dbReference type="NCBIfam" id="TIGR00231">
    <property type="entry name" value="small_GTP"/>
    <property type="match status" value="1"/>
</dbReference>
<dbReference type="PANTHER" id="PTHR43721:SF22">
    <property type="entry name" value="ELONGATION FACTOR TU, MITOCHONDRIAL"/>
    <property type="match status" value="1"/>
</dbReference>
<dbReference type="PANTHER" id="PTHR43721">
    <property type="entry name" value="ELONGATION FACTOR TU-RELATED"/>
    <property type="match status" value="1"/>
</dbReference>
<dbReference type="Pfam" id="PF00009">
    <property type="entry name" value="GTP_EFTU"/>
    <property type="match status" value="1"/>
</dbReference>
<dbReference type="Pfam" id="PF03144">
    <property type="entry name" value="GTP_EFTU_D2"/>
    <property type="match status" value="1"/>
</dbReference>
<dbReference type="Pfam" id="PF03143">
    <property type="entry name" value="GTP_EFTU_D3"/>
    <property type="match status" value="1"/>
</dbReference>
<dbReference type="PRINTS" id="PR00315">
    <property type="entry name" value="ELONGATNFCT"/>
</dbReference>
<dbReference type="SUPFAM" id="SSF50465">
    <property type="entry name" value="EF-Tu/eEF-1alpha/eIF2-gamma C-terminal domain"/>
    <property type="match status" value="1"/>
</dbReference>
<dbReference type="SUPFAM" id="SSF52540">
    <property type="entry name" value="P-loop containing nucleoside triphosphate hydrolases"/>
    <property type="match status" value="1"/>
</dbReference>
<dbReference type="SUPFAM" id="SSF50447">
    <property type="entry name" value="Translation proteins"/>
    <property type="match status" value="1"/>
</dbReference>
<dbReference type="PROSITE" id="PS00301">
    <property type="entry name" value="G_TR_1"/>
    <property type="match status" value="1"/>
</dbReference>
<dbReference type="PROSITE" id="PS51722">
    <property type="entry name" value="G_TR_2"/>
    <property type="match status" value="1"/>
</dbReference>
<feature type="chain" id="PRO_1000095064" description="Elongation factor Tu">
    <location>
        <begin position="1"/>
        <end position="400"/>
    </location>
</feature>
<feature type="domain" description="tr-type G">
    <location>
        <begin position="10"/>
        <end position="209"/>
    </location>
</feature>
<feature type="region of interest" description="G1" evidence="1">
    <location>
        <begin position="19"/>
        <end position="26"/>
    </location>
</feature>
<feature type="region of interest" description="G2" evidence="1">
    <location>
        <begin position="60"/>
        <end position="64"/>
    </location>
</feature>
<feature type="region of interest" description="G3" evidence="1">
    <location>
        <begin position="81"/>
        <end position="84"/>
    </location>
</feature>
<feature type="region of interest" description="G4" evidence="1">
    <location>
        <begin position="136"/>
        <end position="139"/>
    </location>
</feature>
<feature type="region of interest" description="G5" evidence="1">
    <location>
        <begin position="174"/>
        <end position="176"/>
    </location>
</feature>
<feature type="binding site" evidence="2">
    <location>
        <begin position="19"/>
        <end position="26"/>
    </location>
    <ligand>
        <name>GTP</name>
        <dbReference type="ChEBI" id="CHEBI:37565"/>
    </ligand>
</feature>
<feature type="binding site" evidence="2">
    <location>
        <position position="26"/>
    </location>
    <ligand>
        <name>Mg(2+)</name>
        <dbReference type="ChEBI" id="CHEBI:18420"/>
    </ligand>
</feature>
<feature type="binding site" evidence="2">
    <location>
        <begin position="81"/>
        <end position="85"/>
    </location>
    <ligand>
        <name>GTP</name>
        <dbReference type="ChEBI" id="CHEBI:37565"/>
    </ligand>
</feature>
<feature type="binding site" evidence="2">
    <location>
        <begin position="136"/>
        <end position="139"/>
    </location>
    <ligand>
        <name>GTP</name>
        <dbReference type="ChEBI" id="CHEBI:37565"/>
    </ligand>
</feature>
<evidence type="ECO:0000250" key="1"/>
<evidence type="ECO:0000255" key="2">
    <source>
        <dbReference type="HAMAP-Rule" id="MF_00118"/>
    </source>
</evidence>